<gene>
    <name type="primary">opgE</name>
    <name type="synonym">ybiP</name>
    <name type="ordered locus">b0815</name>
    <name type="ordered locus">JW0800</name>
</gene>
<sequence>MNLTLKESLVTRSRVFSPWTAFYFLQSLLINLGLGYPFSLLYTAAFTAILLLLWRTLPRVQKVLVGVSSLVAACYFPFAQAYGAPNFNTLLALHSTNMEESTEILTIFPWYSYLVGLFIFALGVIAIRRKKENEKARWNTFDSLCLVFSVATFFVAPVQNLAWGGVFKLKDTGYPVFRFAKDVIVNNNEVIEEQERMAKLSGMKDTWTVTAVKPKYQTYVVVIGESARRDALGAFGGHWDNTPFASSVNGLIFADYIAASGSTQKSLGLTLNRVVDGKPQFQDNFVTLANRAGFQTWWFSNQGQIGEYDTAIASIAKRADEVYFLKEGNFEADKNTKDEALLDMTAQVLAQEHSQPQLIVLHLMGSHPQACDRTQGKYETFVQSKETSCYLYTMTQTDDLLRKLYDQLRNSGSSFSLVYFSDHGLAFKERGKDVQYLAHDDKYQQNFQVPFMVISSDDKAHRVIKARRSANDFLGFFSQWTGIKAKEINIKYPFISEKKAGPIYITNFQLQKVDYNHLGTDIFDPKP</sequence>
<protein>
    <recommendedName>
        <fullName>Phosphoethanolamine transferase OpgE</fullName>
        <ecNumber>2.7.-.-</ecNumber>
    </recommendedName>
</protein>
<organism>
    <name type="scientific">Escherichia coli (strain K12)</name>
    <dbReference type="NCBI Taxonomy" id="83333"/>
    <lineage>
        <taxon>Bacteria</taxon>
        <taxon>Pseudomonadati</taxon>
        <taxon>Pseudomonadota</taxon>
        <taxon>Gammaproteobacteria</taxon>
        <taxon>Enterobacterales</taxon>
        <taxon>Enterobacteriaceae</taxon>
        <taxon>Escherichia</taxon>
    </lineage>
</organism>
<name>OPGE_ECOLI</name>
<keyword id="KW-0997">Cell inner membrane</keyword>
<keyword id="KW-1003">Cell membrane</keyword>
<keyword id="KW-0472">Membrane</keyword>
<keyword id="KW-1185">Reference proteome</keyword>
<keyword id="KW-0808">Transferase</keyword>
<keyword id="KW-0812">Transmembrane</keyword>
<keyword id="KW-1133">Transmembrane helix</keyword>
<accession>P75785</accession>
<evidence type="ECO:0000255" key="1"/>
<evidence type="ECO:0000269" key="2">
    <source>
    </source>
</evidence>
<evidence type="ECO:0000269" key="3">
    <source>
    </source>
</evidence>
<evidence type="ECO:0000305" key="4"/>
<feature type="chain" id="PRO_0000209145" description="Phosphoethanolamine transferase OpgE">
    <location>
        <begin position="1"/>
        <end position="527"/>
    </location>
</feature>
<feature type="topological domain" description="Periplasmic" evidence="1">
    <location>
        <begin position="1"/>
        <end position="33"/>
    </location>
</feature>
<feature type="transmembrane region" description="Helical" evidence="1">
    <location>
        <begin position="34"/>
        <end position="54"/>
    </location>
</feature>
<feature type="topological domain" description="Cytoplasmic" evidence="1">
    <location>
        <begin position="55"/>
        <end position="62"/>
    </location>
</feature>
<feature type="transmembrane region" description="Helical" evidence="1">
    <location>
        <begin position="63"/>
        <end position="83"/>
    </location>
</feature>
<feature type="topological domain" description="Periplasmic" evidence="1">
    <location>
        <begin position="84"/>
        <end position="106"/>
    </location>
</feature>
<feature type="transmembrane region" description="Helical" evidence="1">
    <location>
        <begin position="107"/>
        <end position="127"/>
    </location>
</feature>
<feature type="topological domain" description="Cytoplasmic" evidence="1">
    <location>
        <begin position="128"/>
        <end position="146"/>
    </location>
</feature>
<feature type="transmembrane region" description="Helical" evidence="1">
    <location>
        <begin position="147"/>
        <end position="167"/>
    </location>
</feature>
<feature type="topological domain" description="Periplasmic" evidence="1">
    <location>
        <begin position="168"/>
        <end position="527"/>
    </location>
</feature>
<dbReference type="EC" id="2.7.-.-"/>
<dbReference type="EMBL" id="U00096">
    <property type="protein sequence ID" value="AAC73902.1"/>
    <property type="molecule type" value="Genomic_DNA"/>
</dbReference>
<dbReference type="EMBL" id="AP009048">
    <property type="protein sequence ID" value="BAA35487.1"/>
    <property type="molecule type" value="Genomic_DNA"/>
</dbReference>
<dbReference type="PIR" id="G64818">
    <property type="entry name" value="G64818"/>
</dbReference>
<dbReference type="RefSeq" id="NP_415336.1">
    <property type="nucleotide sequence ID" value="NC_000913.3"/>
</dbReference>
<dbReference type="RefSeq" id="WP_001054678.1">
    <property type="nucleotide sequence ID" value="NZ_STEB01000019.1"/>
</dbReference>
<dbReference type="SMR" id="P75785"/>
<dbReference type="BioGRID" id="4259975">
    <property type="interactions" value="6"/>
</dbReference>
<dbReference type="FunCoup" id="P75785">
    <property type="interactions" value="29"/>
</dbReference>
<dbReference type="IntAct" id="P75785">
    <property type="interactions" value="3"/>
</dbReference>
<dbReference type="STRING" id="511145.b0815"/>
<dbReference type="jPOST" id="P75785"/>
<dbReference type="PaxDb" id="511145-b0815"/>
<dbReference type="EnsemblBacteria" id="AAC73902">
    <property type="protein sequence ID" value="AAC73902"/>
    <property type="gene ID" value="b0815"/>
</dbReference>
<dbReference type="GeneID" id="93776612"/>
<dbReference type="GeneID" id="945360"/>
<dbReference type="KEGG" id="ecj:JW0800"/>
<dbReference type="KEGG" id="eco:b0815"/>
<dbReference type="KEGG" id="ecoc:C3026_05130"/>
<dbReference type="PATRIC" id="fig|1411691.4.peg.1463"/>
<dbReference type="EchoBASE" id="EB3105"/>
<dbReference type="eggNOG" id="COG2194">
    <property type="taxonomic scope" value="Bacteria"/>
</dbReference>
<dbReference type="HOGENOM" id="CLU_039390_3_0_6"/>
<dbReference type="InParanoid" id="P75785"/>
<dbReference type="OMA" id="EVQYLAH"/>
<dbReference type="OrthoDB" id="9786870at2"/>
<dbReference type="PhylomeDB" id="P75785"/>
<dbReference type="BioCyc" id="EcoCyc:G6418-MONOMER"/>
<dbReference type="BioCyc" id="MetaCyc:G6418-MONOMER"/>
<dbReference type="BRENDA" id="2.7.8.43">
    <property type="organism ID" value="2026"/>
</dbReference>
<dbReference type="UniPathway" id="UPA00637"/>
<dbReference type="PRO" id="PR:P75785"/>
<dbReference type="Proteomes" id="UP000000625">
    <property type="component" value="Chromosome"/>
</dbReference>
<dbReference type="GO" id="GO:0005886">
    <property type="term" value="C:plasma membrane"/>
    <property type="evidence" value="ECO:0000255"/>
    <property type="project" value="EcoCyc"/>
</dbReference>
<dbReference type="GO" id="GO:0016776">
    <property type="term" value="F:phosphotransferase activity, phosphate group as acceptor"/>
    <property type="evidence" value="ECO:0000318"/>
    <property type="project" value="GO_Central"/>
</dbReference>
<dbReference type="GO" id="GO:0009244">
    <property type="term" value="P:lipopolysaccharide core region biosynthetic process"/>
    <property type="evidence" value="ECO:0000318"/>
    <property type="project" value="GO_Central"/>
</dbReference>
<dbReference type="GO" id="GO:1900727">
    <property type="term" value="P:osmoregulated periplasmic glucan biosynthetic process"/>
    <property type="evidence" value="ECO:0000315"/>
    <property type="project" value="EcoCyc"/>
</dbReference>
<dbReference type="CDD" id="cd16017">
    <property type="entry name" value="LptA"/>
    <property type="match status" value="1"/>
</dbReference>
<dbReference type="FunFam" id="3.40.720.10:FF:000019">
    <property type="entry name" value="Phosphoethanolamine transferase ybiP"/>
    <property type="match status" value="1"/>
</dbReference>
<dbReference type="Gene3D" id="3.40.720.10">
    <property type="entry name" value="Alkaline Phosphatase, subunit A"/>
    <property type="match status" value="1"/>
</dbReference>
<dbReference type="InterPro" id="IPR017850">
    <property type="entry name" value="Alkaline_phosphatase_core_sf"/>
</dbReference>
<dbReference type="InterPro" id="IPR040423">
    <property type="entry name" value="PEA_transferase"/>
</dbReference>
<dbReference type="InterPro" id="IPR000917">
    <property type="entry name" value="Sulfatase_N"/>
</dbReference>
<dbReference type="PANTHER" id="PTHR30443">
    <property type="entry name" value="INNER MEMBRANE PROTEIN"/>
    <property type="match status" value="1"/>
</dbReference>
<dbReference type="PANTHER" id="PTHR30443:SF4">
    <property type="entry name" value="PHOSPHOETHANOLAMINE TRANSFERASE OPGE-RELATED"/>
    <property type="match status" value="1"/>
</dbReference>
<dbReference type="Pfam" id="PF00884">
    <property type="entry name" value="Sulfatase"/>
    <property type="match status" value="1"/>
</dbReference>
<dbReference type="SUPFAM" id="SSF53649">
    <property type="entry name" value="Alkaline phosphatase-like"/>
    <property type="match status" value="1"/>
</dbReference>
<proteinExistence type="evidence at protein level"/>
<reference key="1">
    <citation type="journal article" date="1996" name="DNA Res.">
        <title>A 718-kb DNA sequence of the Escherichia coli K-12 genome corresponding to the 12.7-28.0 min region on the linkage map.</title>
        <authorList>
            <person name="Oshima T."/>
            <person name="Aiba H."/>
            <person name="Baba T."/>
            <person name="Fujita K."/>
            <person name="Hayashi K."/>
            <person name="Honjo A."/>
            <person name="Ikemoto K."/>
            <person name="Inada T."/>
            <person name="Itoh T."/>
            <person name="Kajihara M."/>
            <person name="Kanai K."/>
            <person name="Kashimoto K."/>
            <person name="Kimura S."/>
            <person name="Kitagawa M."/>
            <person name="Makino K."/>
            <person name="Masuda S."/>
            <person name="Miki T."/>
            <person name="Mizobuchi K."/>
            <person name="Mori H."/>
            <person name="Motomura K."/>
            <person name="Nakamura Y."/>
            <person name="Nashimoto H."/>
            <person name="Nishio Y."/>
            <person name="Saito N."/>
            <person name="Sampei G."/>
            <person name="Seki Y."/>
            <person name="Tagami H."/>
            <person name="Takemoto K."/>
            <person name="Wada C."/>
            <person name="Yamamoto Y."/>
            <person name="Yano M."/>
            <person name="Horiuchi T."/>
        </authorList>
    </citation>
    <scope>NUCLEOTIDE SEQUENCE [LARGE SCALE GENOMIC DNA]</scope>
    <source>
        <strain>K12 / W3110 / ATCC 27325 / DSM 5911</strain>
    </source>
</reference>
<reference key="2">
    <citation type="journal article" date="1997" name="Science">
        <title>The complete genome sequence of Escherichia coli K-12.</title>
        <authorList>
            <person name="Blattner F.R."/>
            <person name="Plunkett G. III"/>
            <person name="Bloch C.A."/>
            <person name="Perna N.T."/>
            <person name="Burland V."/>
            <person name="Riley M."/>
            <person name="Collado-Vides J."/>
            <person name="Glasner J.D."/>
            <person name="Rode C.K."/>
            <person name="Mayhew G.F."/>
            <person name="Gregor J."/>
            <person name="Davis N.W."/>
            <person name="Kirkpatrick H.A."/>
            <person name="Goeden M.A."/>
            <person name="Rose D.J."/>
            <person name="Mau B."/>
            <person name="Shao Y."/>
        </authorList>
    </citation>
    <scope>NUCLEOTIDE SEQUENCE [LARGE SCALE GENOMIC DNA]</scope>
    <source>
        <strain>K12 / MG1655 / ATCC 47076</strain>
    </source>
</reference>
<reference key="3">
    <citation type="journal article" date="2006" name="Mol. Syst. Biol.">
        <title>Highly accurate genome sequences of Escherichia coli K-12 strains MG1655 and W3110.</title>
        <authorList>
            <person name="Hayashi K."/>
            <person name="Morooka N."/>
            <person name="Yamamoto Y."/>
            <person name="Fujita K."/>
            <person name="Isono K."/>
            <person name="Choi S."/>
            <person name="Ohtsubo E."/>
            <person name="Baba T."/>
            <person name="Wanner B.L."/>
            <person name="Mori H."/>
            <person name="Horiuchi T."/>
        </authorList>
    </citation>
    <scope>NUCLEOTIDE SEQUENCE [LARGE SCALE GENOMIC DNA]</scope>
    <source>
        <strain>K12 / W3110 / ATCC 27325 / DSM 5911</strain>
    </source>
</reference>
<reference key="4">
    <citation type="journal article" date="2005" name="Science">
        <title>Global topology analysis of the Escherichia coli inner membrane proteome.</title>
        <authorList>
            <person name="Daley D.O."/>
            <person name="Rapp M."/>
            <person name="Granseth E."/>
            <person name="Melen K."/>
            <person name="Drew D."/>
            <person name="von Heijne G."/>
        </authorList>
    </citation>
    <scope>TOPOLOGY [LARGE SCALE ANALYSIS]</scope>
    <scope>SUBCELLULAR LOCATION</scope>
    <source>
        <strain>K12 / MG1655 / ATCC 47076</strain>
    </source>
</reference>
<reference key="5">
    <citation type="journal article" date="2013" name="Biomed. Res. Int.">
        <title>Biosynthesis of osmoregulated periplasmic glucans in Escherichia coli: the phosphoethanolamine transferase is encoded by opgE.</title>
        <authorList>
            <person name="Bontemps-Gallo S."/>
            <person name="Cogez V."/>
            <person name="Robbe-Masselot C."/>
            <person name="Quintard K."/>
            <person name="Dondeyne J."/>
            <person name="Madec E."/>
            <person name="Lacroix J.M."/>
        </authorList>
    </citation>
    <scope>FUNCTION</scope>
    <scope>PATHWAY</scope>
    <scope>GENE NAME</scope>
    <source>
        <strain>K12 / ATCC 35607 / JM83</strain>
    </source>
</reference>
<comment type="function">
    <text evidence="3">Catalyzes the addition of a phosphoethanolamine moiety to the osmoregulated periplasmic glucan (OPG) backbone.</text>
</comment>
<comment type="pathway">
    <text evidence="3">Glycan metabolism; osmoregulated periplasmic glucan (OPG) biosynthesis.</text>
</comment>
<comment type="subcellular location">
    <subcellularLocation>
        <location evidence="2">Cell inner membrane</location>
        <topology evidence="2">Multi-pass membrane protein</topology>
    </subcellularLocation>
</comment>
<comment type="similarity">
    <text evidence="4">Belongs to the phosphoethanolamine transferase family.</text>
</comment>